<keyword id="KW-0010">Activator</keyword>
<keyword id="KW-0238">DNA-binding</keyword>
<keyword id="KW-0479">Metal-binding</keyword>
<keyword id="KW-0539">Nucleus</keyword>
<keyword id="KW-1185">Reference proteome</keyword>
<keyword id="KW-0804">Transcription</keyword>
<keyword id="KW-0805">Transcription regulation</keyword>
<keyword id="KW-0862">Zinc</keyword>
<keyword id="KW-0863">Zinc-finger</keyword>
<dbReference type="EMBL" id="AB009053">
    <property type="protein sequence ID" value="BAB10863.1"/>
    <property type="status" value="ALT_SEQ"/>
    <property type="molecule type" value="Genomic_DNA"/>
</dbReference>
<dbReference type="EMBL" id="CP002688">
    <property type="protein sequence ID" value="AED97676.1"/>
    <property type="molecule type" value="Genomic_DNA"/>
</dbReference>
<dbReference type="EMBL" id="BT020467">
    <property type="protein sequence ID" value="AAW38968.1"/>
    <property type="molecule type" value="mRNA"/>
</dbReference>
<dbReference type="EMBL" id="BT020576">
    <property type="protein sequence ID" value="AAW78595.1"/>
    <property type="molecule type" value="mRNA"/>
</dbReference>
<dbReference type="EMBL" id="AK228992">
    <property type="protein sequence ID" value="BAF00880.1"/>
    <property type="molecule type" value="mRNA"/>
</dbReference>
<dbReference type="RefSeq" id="NP_201099.1">
    <property type="nucleotide sequence ID" value="NM_125688.3"/>
</dbReference>
<dbReference type="FunCoup" id="Q9FM03">
    <property type="interactions" value="500"/>
</dbReference>
<dbReference type="STRING" id="3702.Q9FM03"/>
<dbReference type="PaxDb" id="3702-AT5G62940.1"/>
<dbReference type="ProteomicsDB" id="222127"/>
<dbReference type="EnsemblPlants" id="AT5G62940.1">
    <property type="protein sequence ID" value="AT5G62940.1"/>
    <property type="gene ID" value="AT5G62940"/>
</dbReference>
<dbReference type="GeneID" id="836414"/>
<dbReference type="Gramene" id="AT5G62940.1">
    <property type="protein sequence ID" value="AT5G62940.1"/>
    <property type="gene ID" value="AT5G62940"/>
</dbReference>
<dbReference type="KEGG" id="ath:AT5G62940"/>
<dbReference type="Araport" id="AT5G62940"/>
<dbReference type="TAIR" id="AT5G62940">
    <property type="gene designation" value="HCA2"/>
</dbReference>
<dbReference type="eggNOG" id="ENOG502QUGD">
    <property type="taxonomic scope" value="Eukaryota"/>
</dbReference>
<dbReference type="HOGENOM" id="CLU_036438_2_2_1"/>
<dbReference type="InParanoid" id="Q9FM03"/>
<dbReference type="OMA" id="YDANEDH"/>
<dbReference type="OrthoDB" id="1927254at2759"/>
<dbReference type="PhylomeDB" id="Q9FM03"/>
<dbReference type="PRO" id="PR:Q9FM03"/>
<dbReference type="Proteomes" id="UP000006548">
    <property type="component" value="Chromosome 5"/>
</dbReference>
<dbReference type="ExpressionAtlas" id="Q9FM03">
    <property type="expression patterns" value="baseline and differential"/>
</dbReference>
<dbReference type="GO" id="GO:0005634">
    <property type="term" value="C:nucleus"/>
    <property type="evidence" value="ECO:0000314"/>
    <property type="project" value="TAIR"/>
</dbReference>
<dbReference type="GO" id="GO:0003700">
    <property type="term" value="F:DNA-binding transcription factor activity"/>
    <property type="evidence" value="ECO:0000250"/>
    <property type="project" value="TAIR"/>
</dbReference>
<dbReference type="GO" id="GO:0000976">
    <property type="term" value="F:transcription cis-regulatory region binding"/>
    <property type="evidence" value="ECO:0000353"/>
    <property type="project" value="TAIR"/>
</dbReference>
<dbReference type="GO" id="GO:0008270">
    <property type="term" value="F:zinc ion binding"/>
    <property type="evidence" value="ECO:0007669"/>
    <property type="project" value="UniProtKB-KW"/>
</dbReference>
<dbReference type="GO" id="GO:0010087">
    <property type="term" value="P:phloem or xylem histogenesis"/>
    <property type="evidence" value="ECO:0000315"/>
    <property type="project" value="TAIR"/>
</dbReference>
<dbReference type="GO" id="GO:0045893">
    <property type="term" value="P:positive regulation of DNA-templated transcription"/>
    <property type="evidence" value="ECO:0000314"/>
    <property type="project" value="TAIR"/>
</dbReference>
<dbReference type="GO" id="GO:0010067">
    <property type="term" value="P:procambium histogenesis"/>
    <property type="evidence" value="ECO:0000315"/>
    <property type="project" value="TAIR"/>
</dbReference>
<dbReference type="GO" id="GO:0006355">
    <property type="term" value="P:regulation of DNA-templated transcription"/>
    <property type="evidence" value="ECO:0000304"/>
    <property type="project" value="TAIR"/>
</dbReference>
<dbReference type="GO" id="GO:0090057">
    <property type="term" value="P:root radial pattern formation"/>
    <property type="evidence" value="ECO:0000316"/>
    <property type="project" value="TAIR"/>
</dbReference>
<dbReference type="InterPro" id="IPR045174">
    <property type="entry name" value="Dof"/>
</dbReference>
<dbReference type="InterPro" id="IPR003851">
    <property type="entry name" value="Znf_Dof"/>
</dbReference>
<dbReference type="PANTHER" id="PTHR31992">
    <property type="entry name" value="DOF ZINC FINGER PROTEIN DOF1.4-RELATED"/>
    <property type="match status" value="1"/>
</dbReference>
<dbReference type="PANTHER" id="PTHR31992:SF306">
    <property type="entry name" value="DOF ZINC FINGER PROTEIN DOF5.6"/>
    <property type="match status" value="1"/>
</dbReference>
<dbReference type="Pfam" id="PF02701">
    <property type="entry name" value="Zn_ribbon_Dof"/>
    <property type="match status" value="1"/>
</dbReference>
<dbReference type="PROSITE" id="PS01361">
    <property type="entry name" value="ZF_DOF_1"/>
    <property type="match status" value="1"/>
</dbReference>
<dbReference type="PROSITE" id="PS50884">
    <property type="entry name" value="ZF_DOF_2"/>
    <property type="match status" value="1"/>
</dbReference>
<organism>
    <name type="scientific">Arabidopsis thaliana</name>
    <name type="common">Mouse-ear cress</name>
    <dbReference type="NCBI Taxonomy" id="3702"/>
    <lineage>
        <taxon>Eukaryota</taxon>
        <taxon>Viridiplantae</taxon>
        <taxon>Streptophyta</taxon>
        <taxon>Embryophyta</taxon>
        <taxon>Tracheophyta</taxon>
        <taxon>Spermatophyta</taxon>
        <taxon>Magnoliopsida</taxon>
        <taxon>eudicotyledons</taxon>
        <taxon>Gunneridae</taxon>
        <taxon>Pentapetalae</taxon>
        <taxon>rosids</taxon>
        <taxon>malvids</taxon>
        <taxon>Brassicales</taxon>
        <taxon>Brassicaceae</taxon>
        <taxon>Camelineae</taxon>
        <taxon>Arabidopsis</taxon>
    </lineage>
</organism>
<comment type="function">
    <text evidence="1 4 5">Transcription factor that binds specifically to a 5'-AA[AG]G-3' consensus core sequence (By similarity). Promotes expression (PubMed:19915089). The PEAR proteins (e.g. DOF2.4, DOF5.1, DOF3.2, DOF1.1, DOF5.6 and DOF5.3) activate gene expression that promotes radial growth of protophloem sieve elements (PubMed:30626969). Involved in the regulation of interfascicular cambium formation and vascular tissue development, particularly at a very early stage during inflorescence stem development; promotes both cambium activity and phloem specification, but prevents xylem specification (PubMed:19915089).</text>
</comment>
<comment type="subcellular location">
    <subcellularLocation>
        <location evidence="2 4">Nucleus</location>
    </subcellularLocation>
</comment>
<comment type="tissue specificity">
    <text evidence="4 5">The PEAR proteins (e.g. DOF2.4, DOF5.1, DOF3.2, DOF1.1, DOF5.6 and DOF5.3) form a short-range concentration gradient that peaks at protophloem sieve elements (PSE) (PubMed:30626969). Preferentially expressed in the vasculature of all organs, including seedlings, roots, stems, buds, leaves, flowers and siliques, and particularly in the cambium, phloem and interfascicular parenchyma cells of inflorescence stems (PubMed:19915089).</text>
</comment>
<comment type="developmental stage">
    <text evidence="4">Expressed in the vascular tissues and pericycle of primary roots. Detected in the vasculature of the cotyledons, rosette leaves and cauline leaves. In flowers, localized in vasculature of petals, stigma, and stamen filaments, and, to a lower extent, in anthers and carpels. In inflorescence stems, accumulates in the vasculature, particularly in cambium, phloem, and interfascicular parenchyma cells.</text>
</comment>
<comment type="disruption phenotype">
    <text evidence="4">Disruption of interfascicular cambium formation and development in inflorescence stems.</text>
</comment>
<comment type="sequence caution" evidence="9">
    <conflict type="erroneous gene model prediction">
        <sequence resource="EMBL-CDS" id="BAB10863"/>
    </conflict>
</comment>
<gene>
    <name evidence="6" type="primary">DOF5.6</name>
    <name evidence="7" type="synonym">HCA2</name>
    <name evidence="10" type="ordered locus">At5g62940</name>
    <name evidence="11" type="ORF">MQB2.26</name>
</gene>
<proteinExistence type="evidence at transcript level"/>
<feature type="chain" id="PRO_0000074296" description="Dof zinc finger protein DOF5.6">
    <location>
        <begin position="1"/>
        <end position="372"/>
    </location>
</feature>
<feature type="zinc finger region" description="Dof-type" evidence="2">
    <location>
        <begin position="73"/>
        <end position="127"/>
    </location>
</feature>
<feature type="region of interest" description="Disordered" evidence="3">
    <location>
        <begin position="117"/>
        <end position="146"/>
    </location>
</feature>
<feature type="compositionally biased region" description="Low complexity" evidence="3">
    <location>
        <begin position="128"/>
        <end position="145"/>
    </location>
</feature>
<feature type="binding site" evidence="2">
    <location>
        <position position="75"/>
    </location>
    <ligand>
        <name>Zn(2+)</name>
        <dbReference type="ChEBI" id="CHEBI:29105"/>
    </ligand>
</feature>
<feature type="binding site" evidence="2">
    <location>
        <position position="78"/>
    </location>
    <ligand>
        <name>Zn(2+)</name>
        <dbReference type="ChEBI" id="CHEBI:29105"/>
    </ligand>
</feature>
<feature type="binding site" evidence="2">
    <location>
        <position position="100"/>
    </location>
    <ligand>
        <name>Zn(2+)</name>
        <dbReference type="ChEBI" id="CHEBI:29105"/>
    </ligand>
</feature>
<feature type="binding site" evidence="2">
    <location>
        <position position="103"/>
    </location>
    <ligand>
        <name>Zn(2+)</name>
        <dbReference type="ChEBI" id="CHEBI:29105"/>
    </ligand>
</feature>
<feature type="sequence conflict" description="In Ref. 4; BAF00880." evidence="9" ref="4">
    <original>K</original>
    <variation>R</variation>
    <location>
        <position position="309"/>
    </location>
</feature>
<reference key="1">
    <citation type="journal article" date="1998" name="DNA Res.">
        <title>Structural analysis of Arabidopsis thaliana chromosome 5. IV. Sequence features of the regions of 1,456,315 bp covered by nineteen physically assigned P1 and TAC clones.</title>
        <authorList>
            <person name="Sato S."/>
            <person name="Kaneko T."/>
            <person name="Kotani H."/>
            <person name="Nakamura Y."/>
            <person name="Asamizu E."/>
            <person name="Miyajima N."/>
            <person name="Tabata S."/>
        </authorList>
    </citation>
    <scope>NUCLEOTIDE SEQUENCE [LARGE SCALE GENOMIC DNA]</scope>
    <source>
        <strain>cv. Columbia</strain>
    </source>
</reference>
<reference key="2">
    <citation type="journal article" date="2017" name="Plant J.">
        <title>Araport11: a complete reannotation of the Arabidopsis thaliana reference genome.</title>
        <authorList>
            <person name="Cheng C.Y."/>
            <person name="Krishnakumar V."/>
            <person name="Chan A.P."/>
            <person name="Thibaud-Nissen F."/>
            <person name="Schobel S."/>
            <person name="Town C.D."/>
        </authorList>
    </citation>
    <scope>GENOME REANNOTATION</scope>
    <source>
        <strain>cv. Columbia</strain>
    </source>
</reference>
<reference key="3">
    <citation type="submission" date="2005-02" db="EMBL/GenBank/DDBJ databases">
        <title>Arabidopsis ORF clones.</title>
        <authorList>
            <person name="Kim C.J."/>
            <person name="Chen H."/>
            <person name="Cheuk R.F."/>
            <person name="Shinn P."/>
            <person name="Ecker J.R."/>
        </authorList>
    </citation>
    <scope>NUCLEOTIDE SEQUENCE [LARGE SCALE MRNA]</scope>
    <source>
        <strain>cv. Columbia</strain>
    </source>
</reference>
<reference key="4">
    <citation type="submission" date="2006-07" db="EMBL/GenBank/DDBJ databases">
        <title>Large-scale analysis of RIKEN Arabidopsis full-length (RAFL) cDNAs.</title>
        <authorList>
            <person name="Totoki Y."/>
            <person name="Seki M."/>
            <person name="Ishida J."/>
            <person name="Nakajima M."/>
            <person name="Enju A."/>
            <person name="Kamiya A."/>
            <person name="Narusaka M."/>
            <person name="Shin-i T."/>
            <person name="Nakagawa M."/>
            <person name="Sakamoto N."/>
            <person name="Oishi K."/>
            <person name="Kohara Y."/>
            <person name="Kobayashi M."/>
            <person name="Toyoda A."/>
            <person name="Sakaki Y."/>
            <person name="Sakurai T."/>
            <person name="Iida K."/>
            <person name="Akiyama K."/>
            <person name="Satou M."/>
            <person name="Toyoda T."/>
            <person name="Konagaya A."/>
            <person name="Carninci P."/>
            <person name="Kawai J."/>
            <person name="Hayashizaki Y."/>
            <person name="Shinozaki K."/>
        </authorList>
    </citation>
    <scope>NUCLEOTIDE SEQUENCE [LARGE SCALE MRNA]</scope>
    <source>
        <strain>cv. Columbia</strain>
    </source>
</reference>
<reference key="5">
    <citation type="journal article" date="2002" name="Trends Plant Sci.">
        <title>The Dof family of plant transcription factors.</title>
        <authorList>
            <person name="Yanagisawa S."/>
        </authorList>
    </citation>
    <scope>GENE FAMILY</scope>
    <scope>NOMENCLATURE</scope>
</reference>
<reference key="6">
    <citation type="journal article" date="2009" name="Plant Cell">
        <title>Dof5.6/HCA2, a Dof transcription factor gene, regulates interfascicular cambium formation and vascular tissue development in Arabidopsis.</title>
        <authorList>
            <person name="Guo Y."/>
            <person name="Qin G."/>
            <person name="Gu H."/>
            <person name="Qu L.-J."/>
        </authorList>
    </citation>
    <scope>FUNCTION</scope>
    <scope>DISRUPTION PHENOTYPE</scope>
    <scope>TISSUE SPECIFICITY</scope>
    <scope>SUBCELLULAR LOCATION</scope>
    <scope>DEVELOPMENTAL STAGE</scope>
    <source>
        <strain>cv. Columbia</strain>
    </source>
</reference>
<reference key="7">
    <citation type="journal article" date="2019" name="Nature">
        <title>Mobile PEAR transcription factors integrate positional cues to prime cambial growth.</title>
        <authorList>
            <person name="Miyashima S."/>
            <person name="Roszak P."/>
            <person name="Sevilem I."/>
            <person name="Toyokura K."/>
            <person name="Blob B."/>
            <person name="Heo J.-O."/>
            <person name="Mellor N."/>
            <person name="Help-Rinta-Rahko H."/>
            <person name="Otero S."/>
            <person name="Smet W."/>
            <person name="Boekschoten M."/>
            <person name="Hooiveld G."/>
            <person name="Hashimoto K."/>
            <person name="Smetana O."/>
            <person name="Siligato R."/>
            <person name="Wallner E.-S."/>
            <person name="Maehoenen A.P."/>
            <person name="Kondo Y."/>
            <person name="Melnyk C.W."/>
            <person name="Greb T."/>
            <person name="Nakajima K."/>
            <person name="Sozzani R."/>
            <person name="Bishopp A."/>
            <person name="De Rybel B."/>
            <person name="Helariutta Y."/>
        </authorList>
    </citation>
    <scope>FUNCTION</scope>
    <scope>TISSUE SPECIFICITY</scope>
</reference>
<protein>
    <recommendedName>
        <fullName evidence="6">Dof zinc finger protein DOF5.6</fullName>
        <shortName evidence="6">AtDOF5.6</shortName>
    </recommendedName>
    <alternativeName>
        <fullName evidence="7">Protein HIGH CAMBIAL ACTIVITY 2</fullName>
    </alternativeName>
    <alternativeName>
        <fullName evidence="8">Protein PHLOEM EARLY DOF HCA2</fullName>
    </alternativeName>
</protein>
<name>DOF56_ARATH</name>
<evidence type="ECO:0000250" key="1">
    <source>
        <dbReference type="UniProtKB" id="Q9M2U1"/>
    </source>
</evidence>
<evidence type="ECO:0000255" key="2">
    <source>
        <dbReference type="PROSITE-ProRule" id="PRU00071"/>
    </source>
</evidence>
<evidence type="ECO:0000256" key="3">
    <source>
        <dbReference type="SAM" id="MobiDB-lite"/>
    </source>
</evidence>
<evidence type="ECO:0000269" key="4">
    <source>
    </source>
</evidence>
<evidence type="ECO:0000269" key="5">
    <source>
    </source>
</evidence>
<evidence type="ECO:0000303" key="6">
    <source>
    </source>
</evidence>
<evidence type="ECO:0000303" key="7">
    <source>
    </source>
</evidence>
<evidence type="ECO:0000303" key="8">
    <source>
    </source>
</evidence>
<evidence type="ECO:0000305" key="9"/>
<evidence type="ECO:0000312" key="10">
    <source>
        <dbReference type="Araport" id="AT5G62940"/>
    </source>
</evidence>
<evidence type="ECO:0000312" key="11">
    <source>
        <dbReference type="EMBL" id="BAB10863.1"/>
    </source>
</evidence>
<sequence>MGLTSLQVCMDSDWLQESESSGGSMLDSSTNSPSAADILAACSTRPQASAVAVAAAALMDGGRRLRPPHDHPQKCPRCESTHTKFCYYNNYSLSQPRYFCKTCRRYWTKGGTLRNIPVGGGCRKNKKPSSSNSSSSTSSGKKPSNIVTANTSDLMALAHSHQNYQHSPLGFSHFGGMMGSYSTPEHGNVGFLESKYGGLLSQSPRPIDFLDSKFDLMGVNNDNLVMVNHGSNGDHHHHHNHHMGLNHGVGLNNNNNNGGFNGISTGGNGNGGGLMDISTCQRLMLSNYDHHHYNHQEDHQRVATIMDVKPNPKLLSLDWQQDQCYSNGGGSGGAGKSDGGGYGNGGYINGLGSSWNGLMNGYGTSTKTNSLV</sequence>
<accession>Q9FM03</accession>
<accession>Q0WPR9</accession>
<accession>Q5HZ57</accession>